<feature type="chain" id="PRO_0000172060" description="Putative pre-16S rRNA nuclease">
    <location>
        <begin position="1"/>
        <end position="138"/>
    </location>
</feature>
<sequence>MSGTLLAFDFGTKSIGVAVGQRITGTARPLPAIKAQDGTPDWNIIERLLKEWQPDEIIVGLPLNMDGTEQPLTARARKFANRIHGRFGVEVKLHDERLSTVEARSGLFEQGGYRALNKGKVDSASAVIILESYFEQGY</sequence>
<organism>
    <name type="scientific">Escherichia coli O6:H1 (strain CFT073 / ATCC 700928 / UPEC)</name>
    <dbReference type="NCBI Taxonomy" id="199310"/>
    <lineage>
        <taxon>Bacteria</taxon>
        <taxon>Pseudomonadati</taxon>
        <taxon>Pseudomonadota</taxon>
        <taxon>Gammaproteobacteria</taxon>
        <taxon>Enterobacterales</taxon>
        <taxon>Enterobacteriaceae</taxon>
        <taxon>Escherichia</taxon>
    </lineage>
</organism>
<name>YQGF_ECOL6</name>
<reference key="1">
    <citation type="journal article" date="2002" name="Proc. Natl. Acad. Sci. U.S.A.">
        <title>Extensive mosaic structure revealed by the complete genome sequence of uropathogenic Escherichia coli.</title>
        <authorList>
            <person name="Welch R.A."/>
            <person name="Burland V."/>
            <person name="Plunkett G. III"/>
            <person name="Redford P."/>
            <person name="Roesch P."/>
            <person name="Rasko D."/>
            <person name="Buckles E.L."/>
            <person name="Liou S.-R."/>
            <person name="Boutin A."/>
            <person name="Hackett J."/>
            <person name="Stroud D."/>
            <person name="Mayhew G.F."/>
            <person name="Rose D.J."/>
            <person name="Zhou S."/>
            <person name="Schwartz D.C."/>
            <person name="Perna N.T."/>
            <person name="Mobley H.L.T."/>
            <person name="Donnenberg M.S."/>
            <person name="Blattner F.R."/>
        </authorList>
    </citation>
    <scope>NUCLEOTIDE SEQUENCE [LARGE SCALE GENOMIC DNA]</scope>
    <source>
        <strain>CFT073 / ATCC 700928 / UPEC</strain>
    </source>
</reference>
<protein>
    <recommendedName>
        <fullName evidence="1">Putative pre-16S rRNA nuclease</fullName>
        <ecNumber evidence="1">3.1.-.-</ecNumber>
    </recommendedName>
</protein>
<keyword id="KW-0963">Cytoplasm</keyword>
<keyword id="KW-0378">Hydrolase</keyword>
<keyword id="KW-0540">Nuclease</keyword>
<keyword id="KW-1185">Reference proteome</keyword>
<keyword id="KW-0690">Ribosome biogenesis</keyword>
<evidence type="ECO:0000255" key="1">
    <source>
        <dbReference type="HAMAP-Rule" id="MF_00651"/>
    </source>
</evidence>
<accession>P0A8I2</accession>
<accession>P52050</accession>
<dbReference type="EC" id="3.1.-.-" evidence="1"/>
<dbReference type="EMBL" id="AE014075">
    <property type="protein sequence ID" value="AAN81983.1"/>
    <property type="molecule type" value="Genomic_DNA"/>
</dbReference>
<dbReference type="SMR" id="P0A8I2"/>
<dbReference type="STRING" id="199310.c3535"/>
<dbReference type="KEGG" id="ecc:c3535"/>
<dbReference type="eggNOG" id="COG0816">
    <property type="taxonomic scope" value="Bacteria"/>
</dbReference>
<dbReference type="HOGENOM" id="CLU_098240_3_0_6"/>
<dbReference type="BioCyc" id="ECOL199310:C3535-MONOMER"/>
<dbReference type="Proteomes" id="UP000001410">
    <property type="component" value="Chromosome"/>
</dbReference>
<dbReference type="GO" id="GO:0005829">
    <property type="term" value="C:cytosol"/>
    <property type="evidence" value="ECO:0007669"/>
    <property type="project" value="TreeGrafter"/>
</dbReference>
<dbReference type="GO" id="GO:0004518">
    <property type="term" value="F:nuclease activity"/>
    <property type="evidence" value="ECO:0007669"/>
    <property type="project" value="UniProtKB-KW"/>
</dbReference>
<dbReference type="GO" id="GO:0000967">
    <property type="term" value="P:rRNA 5'-end processing"/>
    <property type="evidence" value="ECO:0007669"/>
    <property type="project" value="UniProtKB-UniRule"/>
</dbReference>
<dbReference type="CDD" id="cd16964">
    <property type="entry name" value="YqgF"/>
    <property type="match status" value="1"/>
</dbReference>
<dbReference type="FunFam" id="3.30.420.140:FF:000002">
    <property type="entry name" value="Putative pre-16S rRNA nuclease"/>
    <property type="match status" value="1"/>
</dbReference>
<dbReference type="Gene3D" id="3.30.420.140">
    <property type="entry name" value="YqgF/RNase H-like domain"/>
    <property type="match status" value="1"/>
</dbReference>
<dbReference type="HAMAP" id="MF_00651">
    <property type="entry name" value="Nuclease_YqgF"/>
    <property type="match status" value="1"/>
</dbReference>
<dbReference type="InterPro" id="IPR012337">
    <property type="entry name" value="RNaseH-like_sf"/>
</dbReference>
<dbReference type="InterPro" id="IPR005227">
    <property type="entry name" value="YqgF"/>
</dbReference>
<dbReference type="InterPro" id="IPR006641">
    <property type="entry name" value="YqgF/RNaseH-like_dom"/>
</dbReference>
<dbReference type="InterPro" id="IPR037027">
    <property type="entry name" value="YqgF/RNaseH-like_dom_sf"/>
</dbReference>
<dbReference type="NCBIfam" id="TIGR00250">
    <property type="entry name" value="RNAse_H_YqgF"/>
    <property type="match status" value="1"/>
</dbReference>
<dbReference type="PANTHER" id="PTHR33317">
    <property type="entry name" value="POLYNUCLEOTIDYL TRANSFERASE, RIBONUCLEASE H-LIKE SUPERFAMILY PROTEIN"/>
    <property type="match status" value="1"/>
</dbReference>
<dbReference type="PANTHER" id="PTHR33317:SF4">
    <property type="entry name" value="POLYNUCLEOTIDYL TRANSFERASE, RIBONUCLEASE H-LIKE SUPERFAMILY PROTEIN"/>
    <property type="match status" value="1"/>
</dbReference>
<dbReference type="Pfam" id="PF03652">
    <property type="entry name" value="RuvX"/>
    <property type="match status" value="1"/>
</dbReference>
<dbReference type="SMART" id="SM00732">
    <property type="entry name" value="YqgFc"/>
    <property type="match status" value="1"/>
</dbReference>
<dbReference type="SUPFAM" id="SSF53098">
    <property type="entry name" value="Ribonuclease H-like"/>
    <property type="match status" value="1"/>
</dbReference>
<proteinExistence type="inferred from homology"/>
<comment type="function">
    <text evidence="1">Could be a nuclease involved in processing of the 5'-end of pre-16S rRNA.</text>
</comment>
<comment type="subcellular location">
    <subcellularLocation>
        <location evidence="1">Cytoplasm</location>
    </subcellularLocation>
</comment>
<comment type="similarity">
    <text evidence="1">Belongs to the YqgF nuclease family.</text>
</comment>
<gene>
    <name evidence="1" type="primary">yqgF</name>
    <name type="ordered locus">c3535</name>
</gene>